<sequence length="299" mass="34315">MTEHKSGFVSIIGRPNVGKSTFVNRVIGHKIAIMSDKAQTTRNKIQGVMTRDDAQIIFIDTPGIHKPKHKLGDYMMKVAKNTLSEIDAIMFMVNANEEIGRGDEYIIEMLKNVKTPVFLVLNKIDLVHPDELMPKIEEYQSYMDFTEIVPISALDGLNVDHFIDVLKTYLPEGPKYYPDDQISDHPEQFVVGEIIREKILHLTSEEIPHAIGVNVDRMVKESEDRVHIEATIYVERDSQKGIVIGKGGKKLKEVGKRARRDIEMLLGSKVYLELWVKVQRDWRNKVNFIRQIGYVEDQD</sequence>
<dbReference type="EMBL" id="AJ938182">
    <property type="protein sequence ID" value="CAI81128.1"/>
    <property type="molecule type" value="Genomic_DNA"/>
</dbReference>
<dbReference type="RefSeq" id="WP_000134760.1">
    <property type="nucleotide sequence ID" value="NC_007622.1"/>
</dbReference>
<dbReference type="SMR" id="Q2YT12"/>
<dbReference type="KEGG" id="sab:SAB1439c"/>
<dbReference type="HOGENOM" id="CLU_038009_1_0_9"/>
<dbReference type="GO" id="GO:0005829">
    <property type="term" value="C:cytosol"/>
    <property type="evidence" value="ECO:0007669"/>
    <property type="project" value="TreeGrafter"/>
</dbReference>
<dbReference type="GO" id="GO:0005886">
    <property type="term" value="C:plasma membrane"/>
    <property type="evidence" value="ECO:0007669"/>
    <property type="project" value="UniProtKB-SubCell"/>
</dbReference>
<dbReference type="GO" id="GO:0005525">
    <property type="term" value="F:GTP binding"/>
    <property type="evidence" value="ECO:0007669"/>
    <property type="project" value="UniProtKB-UniRule"/>
</dbReference>
<dbReference type="GO" id="GO:0003924">
    <property type="term" value="F:GTPase activity"/>
    <property type="evidence" value="ECO:0007669"/>
    <property type="project" value="UniProtKB-UniRule"/>
</dbReference>
<dbReference type="GO" id="GO:0043024">
    <property type="term" value="F:ribosomal small subunit binding"/>
    <property type="evidence" value="ECO:0007669"/>
    <property type="project" value="TreeGrafter"/>
</dbReference>
<dbReference type="GO" id="GO:0070181">
    <property type="term" value="F:small ribosomal subunit rRNA binding"/>
    <property type="evidence" value="ECO:0007669"/>
    <property type="project" value="UniProtKB-UniRule"/>
</dbReference>
<dbReference type="GO" id="GO:0000028">
    <property type="term" value="P:ribosomal small subunit assembly"/>
    <property type="evidence" value="ECO:0007669"/>
    <property type="project" value="TreeGrafter"/>
</dbReference>
<dbReference type="CDD" id="cd04163">
    <property type="entry name" value="Era"/>
    <property type="match status" value="1"/>
</dbReference>
<dbReference type="CDD" id="cd22534">
    <property type="entry name" value="KH-II_Era"/>
    <property type="match status" value="1"/>
</dbReference>
<dbReference type="FunFam" id="3.30.300.20:FF:000003">
    <property type="entry name" value="GTPase Era"/>
    <property type="match status" value="1"/>
</dbReference>
<dbReference type="FunFam" id="3.40.50.300:FF:000094">
    <property type="entry name" value="GTPase Era"/>
    <property type="match status" value="1"/>
</dbReference>
<dbReference type="Gene3D" id="3.30.300.20">
    <property type="match status" value="1"/>
</dbReference>
<dbReference type="Gene3D" id="3.40.50.300">
    <property type="entry name" value="P-loop containing nucleotide triphosphate hydrolases"/>
    <property type="match status" value="1"/>
</dbReference>
<dbReference type="HAMAP" id="MF_00367">
    <property type="entry name" value="GTPase_Era"/>
    <property type="match status" value="1"/>
</dbReference>
<dbReference type="InterPro" id="IPR030388">
    <property type="entry name" value="G_ERA_dom"/>
</dbReference>
<dbReference type="InterPro" id="IPR006073">
    <property type="entry name" value="GTP-bd"/>
</dbReference>
<dbReference type="InterPro" id="IPR005662">
    <property type="entry name" value="GTPase_Era-like"/>
</dbReference>
<dbReference type="InterPro" id="IPR015946">
    <property type="entry name" value="KH_dom-like_a/b"/>
</dbReference>
<dbReference type="InterPro" id="IPR004044">
    <property type="entry name" value="KH_dom_type_2"/>
</dbReference>
<dbReference type="InterPro" id="IPR009019">
    <property type="entry name" value="KH_sf_prok-type"/>
</dbReference>
<dbReference type="InterPro" id="IPR027417">
    <property type="entry name" value="P-loop_NTPase"/>
</dbReference>
<dbReference type="InterPro" id="IPR005225">
    <property type="entry name" value="Small_GTP-bd"/>
</dbReference>
<dbReference type="NCBIfam" id="TIGR00436">
    <property type="entry name" value="era"/>
    <property type="match status" value="1"/>
</dbReference>
<dbReference type="NCBIfam" id="NF000908">
    <property type="entry name" value="PRK00089.1"/>
    <property type="match status" value="1"/>
</dbReference>
<dbReference type="NCBIfam" id="TIGR00231">
    <property type="entry name" value="small_GTP"/>
    <property type="match status" value="1"/>
</dbReference>
<dbReference type="PANTHER" id="PTHR42698">
    <property type="entry name" value="GTPASE ERA"/>
    <property type="match status" value="1"/>
</dbReference>
<dbReference type="PANTHER" id="PTHR42698:SF1">
    <property type="entry name" value="GTPASE ERA, MITOCHONDRIAL"/>
    <property type="match status" value="1"/>
</dbReference>
<dbReference type="Pfam" id="PF07650">
    <property type="entry name" value="KH_2"/>
    <property type="match status" value="1"/>
</dbReference>
<dbReference type="Pfam" id="PF01926">
    <property type="entry name" value="MMR_HSR1"/>
    <property type="match status" value="1"/>
</dbReference>
<dbReference type="SUPFAM" id="SSF52540">
    <property type="entry name" value="P-loop containing nucleoside triphosphate hydrolases"/>
    <property type="match status" value="1"/>
</dbReference>
<dbReference type="SUPFAM" id="SSF54814">
    <property type="entry name" value="Prokaryotic type KH domain (KH-domain type II)"/>
    <property type="match status" value="1"/>
</dbReference>
<dbReference type="PROSITE" id="PS51713">
    <property type="entry name" value="G_ERA"/>
    <property type="match status" value="1"/>
</dbReference>
<dbReference type="PROSITE" id="PS50823">
    <property type="entry name" value="KH_TYPE_2"/>
    <property type="match status" value="1"/>
</dbReference>
<name>ERA_STAAB</name>
<reference key="1">
    <citation type="journal article" date="2007" name="PLoS ONE">
        <title>Molecular correlates of host specialization in Staphylococcus aureus.</title>
        <authorList>
            <person name="Herron-Olson L."/>
            <person name="Fitzgerald J.R."/>
            <person name="Musser J.M."/>
            <person name="Kapur V."/>
        </authorList>
    </citation>
    <scope>NUCLEOTIDE SEQUENCE [LARGE SCALE GENOMIC DNA]</scope>
    <source>
        <strain>bovine RF122 / ET3-1</strain>
    </source>
</reference>
<organism>
    <name type="scientific">Staphylococcus aureus (strain bovine RF122 / ET3-1)</name>
    <dbReference type="NCBI Taxonomy" id="273036"/>
    <lineage>
        <taxon>Bacteria</taxon>
        <taxon>Bacillati</taxon>
        <taxon>Bacillota</taxon>
        <taxon>Bacilli</taxon>
        <taxon>Bacillales</taxon>
        <taxon>Staphylococcaceae</taxon>
        <taxon>Staphylococcus</taxon>
    </lineage>
</organism>
<comment type="function">
    <text evidence="1">An essential GTPase that binds both GDP and GTP, with rapid nucleotide exchange. Plays a role in 16S rRNA processing and 30S ribosomal subunit biogenesis and possibly also in cell cycle regulation and energy metabolism.</text>
</comment>
<comment type="subunit">
    <text evidence="1">Monomer.</text>
</comment>
<comment type="subcellular location">
    <subcellularLocation>
        <location>Cytoplasm</location>
    </subcellularLocation>
    <subcellularLocation>
        <location evidence="1">Cell membrane</location>
        <topology evidence="1">Peripheral membrane protein</topology>
    </subcellularLocation>
</comment>
<comment type="similarity">
    <text evidence="1 2">Belongs to the TRAFAC class TrmE-Era-EngA-EngB-Septin-like GTPase superfamily. Era GTPase family.</text>
</comment>
<accession>Q2YT12</accession>
<proteinExistence type="inferred from homology"/>
<keyword id="KW-1003">Cell membrane</keyword>
<keyword id="KW-0963">Cytoplasm</keyword>
<keyword id="KW-0342">GTP-binding</keyword>
<keyword id="KW-0472">Membrane</keyword>
<keyword id="KW-0547">Nucleotide-binding</keyword>
<keyword id="KW-0690">Ribosome biogenesis</keyword>
<keyword id="KW-0694">RNA-binding</keyword>
<keyword id="KW-0699">rRNA-binding</keyword>
<evidence type="ECO:0000255" key="1">
    <source>
        <dbReference type="HAMAP-Rule" id="MF_00367"/>
    </source>
</evidence>
<evidence type="ECO:0000255" key="2">
    <source>
        <dbReference type="PROSITE-ProRule" id="PRU01050"/>
    </source>
</evidence>
<feature type="chain" id="PRO_1000079744" description="GTPase Era">
    <location>
        <begin position="1"/>
        <end position="299"/>
    </location>
</feature>
<feature type="domain" description="Era-type G" evidence="2">
    <location>
        <begin position="5"/>
        <end position="172"/>
    </location>
</feature>
<feature type="domain" description="KH type-2" evidence="1">
    <location>
        <begin position="203"/>
        <end position="280"/>
    </location>
</feature>
<feature type="region of interest" description="G1" evidence="2">
    <location>
        <begin position="13"/>
        <end position="20"/>
    </location>
</feature>
<feature type="region of interest" description="G2" evidence="2">
    <location>
        <begin position="39"/>
        <end position="43"/>
    </location>
</feature>
<feature type="region of interest" description="G3" evidence="2">
    <location>
        <begin position="60"/>
        <end position="63"/>
    </location>
</feature>
<feature type="region of interest" description="G4" evidence="2">
    <location>
        <begin position="122"/>
        <end position="125"/>
    </location>
</feature>
<feature type="region of interest" description="G5" evidence="2">
    <location>
        <begin position="151"/>
        <end position="153"/>
    </location>
</feature>
<feature type="binding site" evidence="1">
    <location>
        <begin position="13"/>
        <end position="20"/>
    </location>
    <ligand>
        <name>GTP</name>
        <dbReference type="ChEBI" id="CHEBI:37565"/>
    </ligand>
</feature>
<feature type="binding site" evidence="1">
    <location>
        <begin position="60"/>
        <end position="64"/>
    </location>
    <ligand>
        <name>GTP</name>
        <dbReference type="ChEBI" id="CHEBI:37565"/>
    </ligand>
</feature>
<feature type="binding site" evidence="1">
    <location>
        <begin position="122"/>
        <end position="125"/>
    </location>
    <ligand>
        <name>GTP</name>
        <dbReference type="ChEBI" id="CHEBI:37565"/>
    </ligand>
</feature>
<protein>
    <recommendedName>
        <fullName evidence="1">GTPase Era</fullName>
    </recommendedName>
</protein>
<gene>
    <name evidence="1" type="primary">era</name>
    <name type="ordered locus">SAB1439c</name>
</gene>